<reference key="1">
    <citation type="submission" date="2006-12" db="EMBL/GenBank/DDBJ databases">
        <title>Complete sequence of Acidovorax avenae subsp. citrulli AAC00-1.</title>
        <authorList>
            <person name="Copeland A."/>
            <person name="Lucas S."/>
            <person name="Lapidus A."/>
            <person name="Barry K."/>
            <person name="Detter J.C."/>
            <person name="Glavina del Rio T."/>
            <person name="Dalin E."/>
            <person name="Tice H."/>
            <person name="Pitluck S."/>
            <person name="Kiss H."/>
            <person name="Brettin T."/>
            <person name="Bruce D."/>
            <person name="Han C."/>
            <person name="Tapia R."/>
            <person name="Gilna P."/>
            <person name="Schmutz J."/>
            <person name="Larimer F."/>
            <person name="Land M."/>
            <person name="Hauser L."/>
            <person name="Kyrpides N."/>
            <person name="Kim E."/>
            <person name="Stahl D."/>
            <person name="Richardson P."/>
        </authorList>
    </citation>
    <scope>NUCLEOTIDE SEQUENCE [LARGE SCALE GENOMIC DNA]</scope>
    <source>
        <strain>AAC00-1</strain>
    </source>
</reference>
<organism>
    <name type="scientific">Paracidovorax citrulli (strain AAC00-1)</name>
    <name type="common">Acidovorax citrulli</name>
    <dbReference type="NCBI Taxonomy" id="397945"/>
    <lineage>
        <taxon>Bacteria</taxon>
        <taxon>Pseudomonadati</taxon>
        <taxon>Pseudomonadota</taxon>
        <taxon>Betaproteobacteria</taxon>
        <taxon>Burkholderiales</taxon>
        <taxon>Comamonadaceae</taxon>
        <taxon>Paracidovorax</taxon>
    </lineage>
</organism>
<comment type="function">
    <text evidence="1">Specifically dimethylates two adjacent adenosines (A1518 and A1519) in the loop of a conserved hairpin near the 3'-end of 16S rRNA in the 30S particle. May play a critical role in biogenesis of 30S subunits.</text>
</comment>
<comment type="catalytic activity">
    <reaction evidence="1">
        <text>adenosine(1518)/adenosine(1519) in 16S rRNA + 4 S-adenosyl-L-methionine = N(6)-dimethyladenosine(1518)/N(6)-dimethyladenosine(1519) in 16S rRNA + 4 S-adenosyl-L-homocysteine + 4 H(+)</text>
        <dbReference type="Rhea" id="RHEA:19609"/>
        <dbReference type="Rhea" id="RHEA-COMP:10232"/>
        <dbReference type="Rhea" id="RHEA-COMP:10233"/>
        <dbReference type="ChEBI" id="CHEBI:15378"/>
        <dbReference type="ChEBI" id="CHEBI:57856"/>
        <dbReference type="ChEBI" id="CHEBI:59789"/>
        <dbReference type="ChEBI" id="CHEBI:74411"/>
        <dbReference type="ChEBI" id="CHEBI:74493"/>
        <dbReference type="EC" id="2.1.1.182"/>
    </reaction>
</comment>
<comment type="subcellular location">
    <subcellularLocation>
        <location evidence="1">Cytoplasm</location>
    </subcellularLocation>
</comment>
<comment type="similarity">
    <text evidence="1">Belongs to the class I-like SAM-binding methyltransferase superfamily. rRNA adenine N(6)-methyltransferase family. RsmA subfamily.</text>
</comment>
<proteinExistence type="inferred from homology"/>
<protein>
    <recommendedName>
        <fullName evidence="1">Ribosomal RNA small subunit methyltransferase A</fullName>
        <ecNumber evidence="1">2.1.1.182</ecNumber>
    </recommendedName>
    <alternativeName>
        <fullName evidence="1">16S rRNA (adenine(1518)-N(6)/adenine(1519)-N(6))-dimethyltransferase</fullName>
    </alternativeName>
    <alternativeName>
        <fullName evidence="1">16S rRNA dimethyladenosine transferase</fullName>
    </alternativeName>
    <alternativeName>
        <fullName evidence="1">16S rRNA dimethylase</fullName>
    </alternativeName>
    <alternativeName>
        <fullName evidence="1">S-adenosylmethionine-6-N', N'-adenosyl(rRNA) dimethyltransferase</fullName>
    </alternativeName>
</protein>
<name>RSMA_PARC0</name>
<dbReference type="EC" id="2.1.1.182" evidence="1"/>
<dbReference type="EMBL" id="CP000512">
    <property type="protein sequence ID" value="ABM35293.1"/>
    <property type="molecule type" value="Genomic_DNA"/>
</dbReference>
<dbReference type="RefSeq" id="WP_011797759.1">
    <property type="nucleotide sequence ID" value="NC_008752.1"/>
</dbReference>
<dbReference type="SMR" id="A1TWF5"/>
<dbReference type="STRING" id="397945.Aave_4762"/>
<dbReference type="KEGG" id="aav:Aave_4762"/>
<dbReference type="eggNOG" id="COG0030">
    <property type="taxonomic scope" value="Bacteria"/>
</dbReference>
<dbReference type="HOGENOM" id="CLU_041220_0_1_4"/>
<dbReference type="OrthoDB" id="9814755at2"/>
<dbReference type="Proteomes" id="UP000002596">
    <property type="component" value="Chromosome"/>
</dbReference>
<dbReference type="GO" id="GO:0005829">
    <property type="term" value="C:cytosol"/>
    <property type="evidence" value="ECO:0007669"/>
    <property type="project" value="TreeGrafter"/>
</dbReference>
<dbReference type="GO" id="GO:0052908">
    <property type="term" value="F:16S rRNA (adenine(1518)-N(6)/adenine(1519)-N(6))-dimethyltransferase activity"/>
    <property type="evidence" value="ECO:0007669"/>
    <property type="project" value="UniProtKB-EC"/>
</dbReference>
<dbReference type="GO" id="GO:0003723">
    <property type="term" value="F:RNA binding"/>
    <property type="evidence" value="ECO:0007669"/>
    <property type="project" value="UniProtKB-KW"/>
</dbReference>
<dbReference type="Gene3D" id="1.10.8.100">
    <property type="entry name" value="Ribosomal RNA adenine dimethylase-like, domain 2"/>
    <property type="match status" value="1"/>
</dbReference>
<dbReference type="Gene3D" id="3.40.50.150">
    <property type="entry name" value="Vaccinia Virus protein VP39"/>
    <property type="match status" value="1"/>
</dbReference>
<dbReference type="HAMAP" id="MF_00607">
    <property type="entry name" value="16SrRNA_methyltr_A"/>
    <property type="match status" value="1"/>
</dbReference>
<dbReference type="InterPro" id="IPR001737">
    <property type="entry name" value="KsgA/Erm"/>
</dbReference>
<dbReference type="InterPro" id="IPR023165">
    <property type="entry name" value="rRNA_Ade_diMease-like_C"/>
</dbReference>
<dbReference type="InterPro" id="IPR020596">
    <property type="entry name" value="rRNA_Ade_Mease_Trfase_CS"/>
</dbReference>
<dbReference type="InterPro" id="IPR020598">
    <property type="entry name" value="rRNA_Ade_methylase_Trfase_N"/>
</dbReference>
<dbReference type="InterPro" id="IPR011530">
    <property type="entry name" value="rRNA_adenine_dimethylase"/>
</dbReference>
<dbReference type="InterPro" id="IPR029063">
    <property type="entry name" value="SAM-dependent_MTases_sf"/>
</dbReference>
<dbReference type="NCBIfam" id="TIGR00755">
    <property type="entry name" value="ksgA"/>
    <property type="match status" value="1"/>
</dbReference>
<dbReference type="PANTHER" id="PTHR11727">
    <property type="entry name" value="DIMETHYLADENOSINE TRANSFERASE"/>
    <property type="match status" value="1"/>
</dbReference>
<dbReference type="PANTHER" id="PTHR11727:SF7">
    <property type="entry name" value="DIMETHYLADENOSINE TRANSFERASE-RELATED"/>
    <property type="match status" value="1"/>
</dbReference>
<dbReference type="Pfam" id="PF00398">
    <property type="entry name" value="RrnaAD"/>
    <property type="match status" value="1"/>
</dbReference>
<dbReference type="SMART" id="SM00650">
    <property type="entry name" value="rADc"/>
    <property type="match status" value="1"/>
</dbReference>
<dbReference type="SUPFAM" id="SSF53335">
    <property type="entry name" value="S-adenosyl-L-methionine-dependent methyltransferases"/>
    <property type="match status" value="1"/>
</dbReference>
<dbReference type="PROSITE" id="PS01131">
    <property type="entry name" value="RRNA_A_DIMETH"/>
    <property type="match status" value="1"/>
</dbReference>
<dbReference type="PROSITE" id="PS51689">
    <property type="entry name" value="SAM_RNA_A_N6_MT"/>
    <property type="match status" value="1"/>
</dbReference>
<keyword id="KW-0963">Cytoplasm</keyword>
<keyword id="KW-0489">Methyltransferase</keyword>
<keyword id="KW-0694">RNA-binding</keyword>
<keyword id="KW-0698">rRNA processing</keyword>
<keyword id="KW-0949">S-adenosyl-L-methionine</keyword>
<keyword id="KW-0808">Transferase</keyword>
<accession>A1TWF5</accession>
<gene>
    <name evidence="1" type="primary">rsmA</name>
    <name evidence="1" type="synonym">ksgA</name>
    <name type="ordered locus">Aave_4762</name>
</gene>
<feature type="chain" id="PRO_1000130233" description="Ribosomal RNA small subunit methyltransferase A">
    <location>
        <begin position="1"/>
        <end position="253"/>
    </location>
</feature>
<feature type="binding site" evidence="1">
    <location>
        <position position="12"/>
    </location>
    <ligand>
        <name>S-adenosyl-L-methionine</name>
        <dbReference type="ChEBI" id="CHEBI:59789"/>
    </ligand>
</feature>
<feature type="binding site" evidence="1">
    <location>
        <position position="14"/>
    </location>
    <ligand>
        <name>S-adenosyl-L-methionine</name>
        <dbReference type="ChEBI" id="CHEBI:59789"/>
    </ligand>
</feature>
<feature type="binding site" evidence="1">
    <location>
        <position position="39"/>
    </location>
    <ligand>
        <name>S-adenosyl-L-methionine</name>
        <dbReference type="ChEBI" id="CHEBI:59789"/>
    </ligand>
</feature>
<feature type="binding site" evidence="1">
    <location>
        <position position="60"/>
    </location>
    <ligand>
        <name>S-adenosyl-L-methionine</name>
        <dbReference type="ChEBI" id="CHEBI:59789"/>
    </ligand>
</feature>
<feature type="binding site" evidence="1">
    <location>
        <position position="81"/>
    </location>
    <ligand>
        <name>S-adenosyl-L-methionine</name>
        <dbReference type="ChEBI" id="CHEBI:59789"/>
    </ligand>
</feature>
<feature type="binding site" evidence="1">
    <location>
        <position position="104"/>
    </location>
    <ligand>
        <name>S-adenosyl-L-methionine</name>
        <dbReference type="ChEBI" id="CHEBI:59789"/>
    </ligand>
</feature>
<evidence type="ECO:0000255" key="1">
    <source>
        <dbReference type="HAMAP-Rule" id="MF_00607"/>
    </source>
</evidence>
<sequence length="253" mass="28248">MKHIPRKRFGQHFLADQAIIDAIVRAIAPAPGQPMVEIGPGLAALTQPLVERLGRLTVVELDRDLAQRLRSHGQLDVIESDVLKVDFSAVAANLGAPRIRIVGNLPYNISTPILFHLLEHVGVVEDQHFMLQKEVIDRMVAQPATSDYGRLSVMLQWRYAMEDVLFVPPESFDPPPRVDSAVVRMVPHAAPAPVAPRLLEELVQVAFSQRRKLLRHTLGRWLEARQFTGTFDTQRRAEEVPVADYVALAQACA</sequence>